<evidence type="ECO:0000255" key="1"/>
<evidence type="ECO:0000255" key="2">
    <source>
        <dbReference type="PROSITE-ProRule" id="PRU00521"/>
    </source>
</evidence>
<evidence type="ECO:0000305" key="3"/>
<evidence type="ECO:0000312" key="4">
    <source>
        <dbReference type="MGI" id="MGI:3030315"/>
    </source>
</evidence>
<accession>Q8VGI5</accession>
<name>OR5P4_MOUSE</name>
<organism>
    <name type="scientific">Mus musculus</name>
    <name type="common">Mouse</name>
    <dbReference type="NCBI Taxonomy" id="10090"/>
    <lineage>
        <taxon>Eukaryota</taxon>
        <taxon>Metazoa</taxon>
        <taxon>Chordata</taxon>
        <taxon>Craniata</taxon>
        <taxon>Vertebrata</taxon>
        <taxon>Euteleostomi</taxon>
        <taxon>Mammalia</taxon>
        <taxon>Eutheria</taxon>
        <taxon>Euarchontoglires</taxon>
        <taxon>Glires</taxon>
        <taxon>Rodentia</taxon>
        <taxon>Myomorpha</taxon>
        <taxon>Muroidea</taxon>
        <taxon>Muridae</taxon>
        <taxon>Murinae</taxon>
        <taxon>Mus</taxon>
        <taxon>Mus</taxon>
    </lineage>
</organism>
<comment type="function">
    <text>Potential odorant receptor.</text>
</comment>
<comment type="subcellular location">
    <subcellularLocation>
        <location evidence="3">Cell membrane</location>
        <topology evidence="1">Multi-pass membrane protein</topology>
    </subcellularLocation>
</comment>
<comment type="similarity">
    <text evidence="2">Belongs to the G-protein coupled receptor 1 family.</text>
</comment>
<dbReference type="EMBL" id="AY073163">
    <property type="protein sequence ID" value="AAL60826.1"/>
    <property type="molecule type" value="Genomic_DNA"/>
</dbReference>
<dbReference type="EMBL" id="AY317589">
    <property type="protein sequence ID" value="AAP70985.1"/>
    <property type="molecule type" value="Genomic_DNA"/>
</dbReference>
<dbReference type="CCDS" id="CCDS21703.1"/>
<dbReference type="RefSeq" id="NP_667136.1">
    <property type="nucleotide sequence ID" value="NM_146925.1"/>
</dbReference>
<dbReference type="SMR" id="Q8VGI5"/>
<dbReference type="FunCoup" id="Q8VGI5">
    <property type="interactions" value="1150"/>
</dbReference>
<dbReference type="STRING" id="10090.ENSMUSP00000151152"/>
<dbReference type="GlyCosmos" id="Q8VGI5">
    <property type="glycosylation" value="1 site, No reported glycans"/>
</dbReference>
<dbReference type="GlyGen" id="Q8VGI5">
    <property type="glycosylation" value="1 site"/>
</dbReference>
<dbReference type="PaxDb" id="10090-ENSMUSP00000063555"/>
<dbReference type="DNASU" id="258927"/>
<dbReference type="Ensembl" id="ENSMUST00000067143.7">
    <property type="protein sequence ID" value="ENSMUSP00000063555.5"/>
    <property type="gene ID" value="ENSMUSG00000054236.7"/>
</dbReference>
<dbReference type="Ensembl" id="ENSMUST00000213601.2">
    <property type="protein sequence ID" value="ENSMUSP00000151152.2"/>
    <property type="gene ID" value="ENSMUSG00000054236.7"/>
</dbReference>
<dbReference type="GeneID" id="258927"/>
<dbReference type="KEGG" id="mmu:258927"/>
<dbReference type="UCSC" id="uc009jbw.1">
    <property type="organism name" value="mouse"/>
</dbReference>
<dbReference type="AGR" id="MGI:3030315"/>
<dbReference type="CTD" id="258927"/>
<dbReference type="MGI" id="MGI:3030315">
    <property type="gene designation" value="Or5p4"/>
</dbReference>
<dbReference type="VEuPathDB" id="HostDB:ENSMUSG00000054236"/>
<dbReference type="eggNOG" id="ENOG502SKA1">
    <property type="taxonomic scope" value="Eukaryota"/>
</dbReference>
<dbReference type="GeneTree" id="ENSGT01130000278279"/>
<dbReference type="HOGENOM" id="CLU_012526_1_0_1"/>
<dbReference type="InParanoid" id="Q8VGI5"/>
<dbReference type="OMA" id="NYSADQV"/>
<dbReference type="OrthoDB" id="9873506at2759"/>
<dbReference type="PhylomeDB" id="Q8VGI5"/>
<dbReference type="TreeFam" id="TF352753"/>
<dbReference type="BioGRID-ORCS" id="258927">
    <property type="hits" value="3 hits in 72 CRISPR screens"/>
</dbReference>
<dbReference type="ChiTaRS" id="Olfr481">
    <property type="organism name" value="mouse"/>
</dbReference>
<dbReference type="PRO" id="PR:Q8VGI5"/>
<dbReference type="Proteomes" id="UP000000589">
    <property type="component" value="Chromosome 7"/>
</dbReference>
<dbReference type="RNAct" id="Q8VGI5">
    <property type="molecule type" value="protein"/>
</dbReference>
<dbReference type="Bgee" id="ENSMUSG00000054236">
    <property type="expression patterns" value="Expressed in embryonic facial prominence"/>
</dbReference>
<dbReference type="GO" id="GO:0016020">
    <property type="term" value="C:membrane"/>
    <property type="evidence" value="ECO:0000247"/>
    <property type="project" value="MGI"/>
</dbReference>
<dbReference type="GO" id="GO:0005886">
    <property type="term" value="C:plasma membrane"/>
    <property type="evidence" value="ECO:0007669"/>
    <property type="project" value="UniProtKB-SubCell"/>
</dbReference>
<dbReference type="GO" id="GO:0004930">
    <property type="term" value="F:G protein-coupled receptor activity"/>
    <property type="evidence" value="ECO:0007669"/>
    <property type="project" value="UniProtKB-KW"/>
</dbReference>
<dbReference type="GO" id="GO:0004984">
    <property type="term" value="F:olfactory receptor activity"/>
    <property type="evidence" value="ECO:0000247"/>
    <property type="project" value="MGI"/>
</dbReference>
<dbReference type="GO" id="GO:0007186">
    <property type="term" value="P:G protein-coupled receptor signaling pathway"/>
    <property type="evidence" value="ECO:0000247"/>
    <property type="project" value="MGI"/>
</dbReference>
<dbReference type="GO" id="GO:0007608">
    <property type="term" value="P:sensory perception of smell"/>
    <property type="evidence" value="ECO:0000247"/>
    <property type="project" value="MGI"/>
</dbReference>
<dbReference type="CDD" id="cd15416">
    <property type="entry name" value="7tmA_OR5P-like"/>
    <property type="match status" value="1"/>
</dbReference>
<dbReference type="FunFam" id="1.20.1070.10:FF:000004">
    <property type="entry name" value="Olfactory receptor"/>
    <property type="match status" value="1"/>
</dbReference>
<dbReference type="Gene3D" id="1.20.1070.10">
    <property type="entry name" value="Rhodopsin 7-helix transmembrane proteins"/>
    <property type="match status" value="1"/>
</dbReference>
<dbReference type="InterPro" id="IPR000276">
    <property type="entry name" value="GPCR_Rhodpsn"/>
</dbReference>
<dbReference type="InterPro" id="IPR017452">
    <property type="entry name" value="GPCR_Rhodpsn_7TM"/>
</dbReference>
<dbReference type="InterPro" id="IPR000725">
    <property type="entry name" value="Olfact_rcpt"/>
</dbReference>
<dbReference type="PANTHER" id="PTHR48018">
    <property type="entry name" value="OLFACTORY RECEPTOR"/>
    <property type="match status" value="1"/>
</dbReference>
<dbReference type="Pfam" id="PF13853">
    <property type="entry name" value="7tm_4"/>
    <property type="match status" value="1"/>
</dbReference>
<dbReference type="PRINTS" id="PR00237">
    <property type="entry name" value="GPCRRHODOPSN"/>
</dbReference>
<dbReference type="PRINTS" id="PR00245">
    <property type="entry name" value="OLFACTORYR"/>
</dbReference>
<dbReference type="SUPFAM" id="SSF81321">
    <property type="entry name" value="Family A G protein-coupled receptor-like"/>
    <property type="match status" value="1"/>
</dbReference>
<dbReference type="PROSITE" id="PS00237">
    <property type="entry name" value="G_PROTEIN_RECEP_F1_1"/>
    <property type="match status" value="1"/>
</dbReference>
<dbReference type="PROSITE" id="PS50262">
    <property type="entry name" value="G_PROTEIN_RECEP_F1_2"/>
    <property type="match status" value="1"/>
</dbReference>
<protein>
    <recommendedName>
        <fullName evidence="3">Olfactory receptor 5P4</fullName>
    </recommendedName>
    <alternativeName>
        <fullName>Olfactory receptor 204-2</fullName>
    </alternativeName>
    <alternativeName>
        <fullName>Olfactory receptor 481</fullName>
    </alternativeName>
</protein>
<keyword id="KW-1003">Cell membrane</keyword>
<keyword id="KW-1015">Disulfide bond</keyword>
<keyword id="KW-0297">G-protein coupled receptor</keyword>
<keyword id="KW-0325">Glycoprotein</keyword>
<keyword id="KW-0472">Membrane</keyword>
<keyword id="KW-0552">Olfaction</keyword>
<keyword id="KW-0675">Receptor</keyword>
<keyword id="KW-1185">Reference proteome</keyword>
<keyword id="KW-0716">Sensory transduction</keyword>
<keyword id="KW-0807">Transducer</keyword>
<keyword id="KW-0812">Transmembrane</keyword>
<keyword id="KW-1133">Transmembrane helix</keyword>
<sequence>METENDTMVTEFIILGLTDSATLRAILFVFFLPVYIVTVVGNISIILLIRSSPQLHTPMYLFLSHLAFVDIGYSTSVTPIMLISFLREETTIPLAGCAAQLGSDVAFGTTECFLLATMAYDRYVAICSPLLYSTQMSPAICCFLLGASYLGGCMNASSFTGCFVNLNFCGPNKVNHFFCDLFPLVKLSCGHAYIAEISPSISSASVLVSTLSTIIVSYIYILHSILRMRSAEGRNKAFSTCTSHLTAVTLFYGTVLFVYVMPKSSYSADQVKVASVVYTVVIPMLNPLIYSLRNKEVKEAMKKLMARTHWFP</sequence>
<feature type="chain" id="PRO_0000150839" description="Olfactory receptor 5P4">
    <location>
        <begin position="1"/>
        <end position="312"/>
    </location>
</feature>
<feature type="topological domain" description="Extracellular" evidence="1">
    <location>
        <begin position="1"/>
        <end position="25"/>
    </location>
</feature>
<feature type="transmembrane region" description="Helical; Name=1" evidence="1">
    <location>
        <begin position="26"/>
        <end position="46"/>
    </location>
</feature>
<feature type="topological domain" description="Cytoplasmic" evidence="1">
    <location>
        <begin position="47"/>
        <end position="54"/>
    </location>
</feature>
<feature type="transmembrane region" description="Helical; Name=2" evidence="1">
    <location>
        <begin position="55"/>
        <end position="75"/>
    </location>
</feature>
<feature type="topological domain" description="Extracellular" evidence="1">
    <location>
        <begin position="76"/>
        <end position="99"/>
    </location>
</feature>
<feature type="transmembrane region" description="Helical; Name=3" evidence="1">
    <location>
        <begin position="100"/>
        <end position="120"/>
    </location>
</feature>
<feature type="topological domain" description="Cytoplasmic" evidence="1">
    <location>
        <begin position="121"/>
        <end position="133"/>
    </location>
</feature>
<feature type="transmembrane region" description="Helical; Name=4" evidence="1">
    <location>
        <begin position="134"/>
        <end position="154"/>
    </location>
</feature>
<feature type="topological domain" description="Extracellular" evidence="1">
    <location>
        <begin position="155"/>
        <end position="196"/>
    </location>
</feature>
<feature type="transmembrane region" description="Helical; Name=5" evidence="1">
    <location>
        <begin position="197"/>
        <end position="217"/>
    </location>
</feature>
<feature type="topological domain" description="Cytoplasmic" evidence="1">
    <location>
        <begin position="218"/>
        <end position="237"/>
    </location>
</feature>
<feature type="transmembrane region" description="Helical; Name=6" evidence="1">
    <location>
        <begin position="238"/>
        <end position="258"/>
    </location>
</feature>
<feature type="topological domain" description="Extracellular" evidence="1">
    <location>
        <begin position="259"/>
        <end position="271"/>
    </location>
</feature>
<feature type="transmembrane region" description="Helical; Name=7" evidence="1">
    <location>
        <begin position="272"/>
        <end position="292"/>
    </location>
</feature>
<feature type="topological domain" description="Cytoplasmic" evidence="1">
    <location>
        <begin position="293"/>
        <end position="312"/>
    </location>
</feature>
<feature type="glycosylation site" description="N-linked (GlcNAc...) asparagine" evidence="1">
    <location>
        <position position="5"/>
    </location>
</feature>
<feature type="disulfide bond" evidence="2">
    <location>
        <begin position="97"/>
        <end position="189"/>
    </location>
</feature>
<proteinExistence type="inferred from homology"/>
<gene>
    <name evidence="4" type="primary">Or5p4</name>
    <name evidence="4" type="synonym">Mor204-2</name>
    <name evidence="4" type="synonym">Olfr481</name>
</gene>
<reference key="1">
    <citation type="journal article" date="2002" name="Nat. Neurosci.">
        <title>The olfactory receptor gene superfamily of the mouse.</title>
        <authorList>
            <person name="Zhang X."/>
            <person name="Firestein S."/>
        </authorList>
    </citation>
    <scope>NUCLEOTIDE SEQUENCE [GENOMIC DNA]</scope>
</reference>
<reference key="2">
    <citation type="journal article" date="2002" name="Hum. Mol. Genet.">
        <title>Different evolutionary processes shaped the mouse and human olfactory receptor gene families.</title>
        <authorList>
            <person name="Young J.M."/>
            <person name="Friedman C."/>
            <person name="Williams E.M."/>
            <person name="Ross J.A."/>
            <person name="Tonnes-Priddy L."/>
            <person name="Trask B.J."/>
        </authorList>
    </citation>
    <scope>NUCLEOTIDE SEQUENCE [GENOMIC DNA]</scope>
</reference>
<reference key="3">
    <citation type="journal article" date="2002" name="Hum. Mol. Genet.">
        <authorList>
            <person name="Young J.M."/>
            <person name="Friedman C."/>
            <person name="Williams E.M."/>
            <person name="Ross J.A."/>
            <person name="Tonnes-Priddy L."/>
            <person name="Trask B.J."/>
        </authorList>
    </citation>
    <scope>ERRATUM OF PUBMED:11875048</scope>
</reference>